<reference evidence="8 12" key="1">
    <citation type="journal article" date="2000" name="Development">
        <title>The bHLH gene Hes6, an inhibitor of Hes1, promotes neuronal differentiation.</title>
        <authorList>
            <person name="Bae S.-K."/>
            <person name="Bessho Y."/>
            <person name="Hojo M."/>
            <person name="Kageyama R."/>
        </authorList>
    </citation>
    <scope>NUCLEOTIDE SEQUENCE [MRNA]</scope>
    <scope>FUNCTION</scope>
    <scope>INTERACTION WITH HES1</scope>
    <scope>DEVELOPMENTAL STAGE</scope>
    <source>
        <tissue evidence="5">Embryo</tissue>
    </source>
</reference>
<reference evidence="8 9" key="2">
    <citation type="journal article" date="2000" name="Mech. Dev.">
        <title>Expression of hes6, a new member of the Hairy/Enhancer-of-split family, in mouse development.</title>
        <authorList>
            <person name="Pissarra L."/>
            <person name="Henrique D."/>
            <person name="Duarte A."/>
        </authorList>
    </citation>
    <scope>NUCLEOTIDE SEQUENCE [MRNA]</scope>
    <scope>TISSUE SPECIFICITY</scope>
</reference>
<reference evidence="8 11" key="3">
    <citation type="journal article" date="2000" name="Mech. Dev.">
        <title>Expression of mouse HES-6, a new member of the Hairy/Enhancer of split family of bHLH transcription factors.</title>
        <authorList>
            <person name="Vasiliauskas D."/>
            <person name="Stern C.D."/>
        </authorList>
    </citation>
    <scope>NUCLEOTIDE SEQUENCE [MRNA]</scope>
    <scope>TISSUE SPECIFICITY</scope>
    <source>
        <strain evidence="11">C57BL/6J</strain>
    </source>
</reference>
<reference key="4">
    <citation type="journal article" date="2005" name="Science">
        <title>The transcriptional landscape of the mammalian genome.</title>
        <authorList>
            <person name="Carninci P."/>
            <person name="Kasukawa T."/>
            <person name="Katayama S."/>
            <person name="Gough J."/>
            <person name="Frith M.C."/>
            <person name="Maeda N."/>
            <person name="Oyama R."/>
            <person name="Ravasi T."/>
            <person name="Lenhard B."/>
            <person name="Wells C."/>
            <person name="Kodzius R."/>
            <person name="Shimokawa K."/>
            <person name="Bajic V.B."/>
            <person name="Brenner S.E."/>
            <person name="Batalov S."/>
            <person name="Forrest A.R."/>
            <person name="Zavolan M."/>
            <person name="Davis M.J."/>
            <person name="Wilming L.G."/>
            <person name="Aidinis V."/>
            <person name="Allen J.E."/>
            <person name="Ambesi-Impiombato A."/>
            <person name="Apweiler R."/>
            <person name="Aturaliya R.N."/>
            <person name="Bailey T.L."/>
            <person name="Bansal M."/>
            <person name="Baxter L."/>
            <person name="Beisel K.W."/>
            <person name="Bersano T."/>
            <person name="Bono H."/>
            <person name="Chalk A.M."/>
            <person name="Chiu K.P."/>
            <person name="Choudhary V."/>
            <person name="Christoffels A."/>
            <person name="Clutterbuck D.R."/>
            <person name="Crowe M.L."/>
            <person name="Dalla E."/>
            <person name="Dalrymple B.P."/>
            <person name="de Bono B."/>
            <person name="Della Gatta G."/>
            <person name="di Bernardo D."/>
            <person name="Down T."/>
            <person name="Engstrom P."/>
            <person name="Fagiolini M."/>
            <person name="Faulkner G."/>
            <person name="Fletcher C.F."/>
            <person name="Fukushima T."/>
            <person name="Furuno M."/>
            <person name="Futaki S."/>
            <person name="Gariboldi M."/>
            <person name="Georgii-Hemming P."/>
            <person name="Gingeras T.R."/>
            <person name="Gojobori T."/>
            <person name="Green R.E."/>
            <person name="Gustincich S."/>
            <person name="Harbers M."/>
            <person name="Hayashi Y."/>
            <person name="Hensch T.K."/>
            <person name="Hirokawa N."/>
            <person name="Hill D."/>
            <person name="Huminiecki L."/>
            <person name="Iacono M."/>
            <person name="Ikeo K."/>
            <person name="Iwama A."/>
            <person name="Ishikawa T."/>
            <person name="Jakt M."/>
            <person name="Kanapin A."/>
            <person name="Katoh M."/>
            <person name="Kawasawa Y."/>
            <person name="Kelso J."/>
            <person name="Kitamura H."/>
            <person name="Kitano H."/>
            <person name="Kollias G."/>
            <person name="Krishnan S.P."/>
            <person name="Kruger A."/>
            <person name="Kummerfeld S.K."/>
            <person name="Kurochkin I.V."/>
            <person name="Lareau L.F."/>
            <person name="Lazarevic D."/>
            <person name="Lipovich L."/>
            <person name="Liu J."/>
            <person name="Liuni S."/>
            <person name="McWilliam S."/>
            <person name="Madan Babu M."/>
            <person name="Madera M."/>
            <person name="Marchionni L."/>
            <person name="Matsuda H."/>
            <person name="Matsuzawa S."/>
            <person name="Miki H."/>
            <person name="Mignone F."/>
            <person name="Miyake S."/>
            <person name="Morris K."/>
            <person name="Mottagui-Tabar S."/>
            <person name="Mulder N."/>
            <person name="Nakano N."/>
            <person name="Nakauchi H."/>
            <person name="Ng P."/>
            <person name="Nilsson R."/>
            <person name="Nishiguchi S."/>
            <person name="Nishikawa S."/>
            <person name="Nori F."/>
            <person name="Ohara O."/>
            <person name="Okazaki Y."/>
            <person name="Orlando V."/>
            <person name="Pang K.C."/>
            <person name="Pavan W.J."/>
            <person name="Pavesi G."/>
            <person name="Pesole G."/>
            <person name="Petrovsky N."/>
            <person name="Piazza S."/>
            <person name="Reed J."/>
            <person name="Reid J.F."/>
            <person name="Ring B.Z."/>
            <person name="Ringwald M."/>
            <person name="Rost B."/>
            <person name="Ruan Y."/>
            <person name="Salzberg S.L."/>
            <person name="Sandelin A."/>
            <person name="Schneider C."/>
            <person name="Schoenbach C."/>
            <person name="Sekiguchi K."/>
            <person name="Semple C.A."/>
            <person name="Seno S."/>
            <person name="Sessa L."/>
            <person name="Sheng Y."/>
            <person name="Shibata Y."/>
            <person name="Shimada H."/>
            <person name="Shimada K."/>
            <person name="Silva D."/>
            <person name="Sinclair B."/>
            <person name="Sperling S."/>
            <person name="Stupka E."/>
            <person name="Sugiura K."/>
            <person name="Sultana R."/>
            <person name="Takenaka Y."/>
            <person name="Taki K."/>
            <person name="Tammoja K."/>
            <person name="Tan S.L."/>
            <person name="Tang S."/>
            <person name="Taylor M.S."/>
            <person name="Tegner J."/>
            <person name="Teichmann S.A."/>
            <person name="Ueda H.R."/>
            <person name="van Nimwegen E."/>
            <person name="Verardo R."/>
            <person name="Wei C.L."/>
            <person name="Yagi K."/>
            <person name="Yamanishi H."/>
            <person name="Zabarovsky E."/>
            <person name="Zhu S."/>
            <person name="Zimmer A."/>
            <person name="Hide W."/>
            <person name="Bult C."/>
            <person name="Grimmond S.M."/>
            <person name="Teasdale R.D."/>
            <person name="Liu E.T."/>
            <person name="Brusic V."/>
            <person name="Quackenbush J."/>
            <person name="Wahlestedt C."/>
            <person name="Mattick J.S."/>
            <person name="Hume D.A."/>
            <person name="Kai C."/>
            <person name="Sasaki D."/>
            <person name="Tomaru Y."/>
            <person name="Fukuda S."/>
            <person name="Kanamori-Katayama M."/>
            <person name="Suzuki M."/>
            <person name="Aoki J."/>
            <person name="Arakawa T."/>
            <person name="Iida J."/>
            <person name="Imamura K."/>
            <person name="Itoh M."/>
            <person name="Kato T."/>
            <person name="Kawaji H."/>
            <person name="Kawagashira N."/>
            <person name="Kawashima T."/>
            <person name="Kojima M."/>
            <person name="Kondo S."/>
            <person name="Konno H."/>
            <person name="Nakano K."/>
            <person name="Ninomiya N."/>
            <person name="Nishio T."/>
            <person name="Okada M."/>
            <person name="Plessy C."/>
            <person name="Shibata K."/>
            <person name="Shiraki T."/>
            <person name="Suzuki S."/>
            <person name="Tagami M."/>
            <person name="Waki K."/>
            <person name="Watahiki A."/>
            <person name="Okamura-Oho Y."/>
            <person name="Suzuki H."/>
            <person name="Kawai J."/>
            <person name="Hayashizaki Y."/>
        </authorList>
    </citation>
    <scope>NUCLEOTIDE SEQUENCE [LARGE SCALE MRNA]</scope>
    <source>
        <strain>C57BL/6J</strain>
        <strain>NOD</strain>
        <tissue>Embryo</tissue>
    </source>
</reference>
<reference evidence="8 10" key="5">
    <citation type="journal article" date="2004" name="Genome Res.">
        <title>The status, quality, and expansion of the NIH full-length cDNA project: the Mammalian Gene Collection (MGC).</title>
        <authorList>
            <consortium name="The MGC Project Team"/>
        </authorList>
    </citation>
    <scope>NUCLEOTIDE SEQUENCE [LARGE SCALE MRNA]</scope>
    <source>
        <strain evidence="10">Czech II</strain>
        <tissue>Mammary tumor</tissue>
    </source>
</reference>
<name>HES6_MOUSE</name>
<gene>
    <name evidence="12" type="primary">Hes6</name>
</gene>
<sequence>MAPSQAPSRDRAGQEDEDRWEARGDRKARKPLVEKKRRARINESLQELRLLLAGTEVQAKLENAEVLELTVRRVQGALRGRAREREQLQAEASERFAAGYIQCMHEVHTFVSTCQAIDATVSAELLNHLLESMPLREGSSFQDLLGDSLAGLPGGSGRSSWPPGGSPESPLSSPPGPGDDLCSDLEEIPEAELNRVPAEGPDLVSTSLGSLTAARRAQSVWRPW</sequence>
<proteinExistence type="evidence at protein level"/>
<dbReference type="EMBL" id="AB035178">
    <property type="protein sequence ID" value="BAA96081.1"/>
    <property type="molecule type" value="mRNA"/>
</dbReference>
<dbReference type="EMBL" id="AF247040">
    <property type="protein sequence ID" value="AAF63757.1"/>
    <property type="molecule type" value="mRNA"/>
</dbReference>
<dbReference type="EMBL" id="AF260236">
    <property type="protein sequence ID" value="AAK51633.1"/>
    <property type="molecule type" value="mRNA"/>
</dbReference>
<dbReference type="EMBL" id="AK013443">
    <property type="protein sequence ID" value="BAB28856.1"/>
    <property type="molecule type" value="mRNA"/>
</dbReference>
<dbReference type="EMBL" id="AK076135">
    <property type="protein sequence ID" value="BAC36210.1"/>
    <property type="molecule type" value="mRNA"/>
</dbReference>
<dbReference type="EMBL" id="AK155340">
    <property type="protein sequence ID" value="BAE33204.1"/>
    <property type="molecule type" value="mRNA"/>
</dbReference>
<dbReference type="EMBL" id="BC012897">
    <property type="protein sequence ID" value="AAH12897.1"/>
    <property type="molecule type" value="mRNA"/>
</dbReference>
<dbReference type="CCDS" id="CCDS15163.1"/>
<dbReference type="RefSeq" id="NP_062352.1">
    <property type="nucleotide sequence ID" value="NM_019479.3"/>
</dbReference>
<dbReference type="RefSeq" id="XP_036008362.1">
    <property type="nucleotide sequence ID" value="XM_036152469.1"/>
</dbReference>
<dbReference type="SMR" id="Q9JHE6"/>
<dbReference type="BioGRID" id="207731">
    <property type="interactions" value="6"/>
</dbReference>
<dbReference type="FunCoup" id="Q9JHE6">
    <property type="interactions" value="281"/>
</dbReference>
<dbReference type="IntAct" id="Q9JHE6">
    <property type="interactions" value="4"/>
</dbReference>
<dbReference type="STRING" id="10090.ENSMUSP00000084062"/>
<dbReference type="PhosphoSitePlus" id="Q9JHE6"/>
<dbReference type="PaxDb" id="10090-ENSMUSP00000084062"/>
<dbReference type="ProteomicsDB" id="269659"/>
<dbReference type="Antibodypedia" id="20277">
    <property type="antibodies" value="301 antibodies from 31 providers"/>
</dbReference>
<dbReference type="DNASU" id="55927"/>
<dbReference type="Ensembl" id="ENSMUST00000086851.2">
    <property type="protein sequence ID" value="ENSMUSP00000084062.2"/>
    <property type="gene ID" value="ENSMUSG00000067071.9"/>
</dbReference>
<dbReference type="GeneID" id="55927"/>
<dbReference type="KEGG" id="mmu:55927"/>
<dbReference type="UCSC" id="uc007cau.1">
    <property type="organism name" value="mouse"/>
</dbReference>
<dbReference type="AGR" id="MGI:1859852"/>
<dbReference type="CTD" id="55502"/>
<dbReference type="MGI" id="MGI:1859852">
    <property type="gene designation" value="Hes6"/>
</dbReference>
<dbReference type="VEuPathDB" id="HostDB:ENSMUSG00000067071"/>
<dbReference type="eggNOG" id="KOG4304">
    <property type="taxonomic scope" value="Eukaryota"/>
</dbReference>
<dbReference type="GeneTree" id="ENSGT00940000161398"/>
<dbReference type="HOGENOM" id="CLU_068550_0_0_1"/>
<dbReference type="InParanoid" id="Q9JHE6"/>
<dbReference type="OMA" id="EDESCYG"/>
<dbReference type="OrthoDB" id="6085656at2759"/>
<dbReference type="PhylomeDB" id="Q9JHE6"/>
<dbReference type="TreeFam" id="TF351373"/>
<dbReference type="BioGRID-ORCS" id="55927">
    <property type="hits" value="4 hits in 82 CRISPR screens"/>
</dbReference>
<dbReference type="ChiTaRS" id="Hes6">
    <property type="organism name" value="mouse"/>
</dbReference>
<dbReference type="PRO" id="PR:Q9JHE6"/>
<dbReference type="Proteomes" id="UP000000589">
    <property type="component" value="Chromosome 1"/>
</dbReference>
<dbReference type="RNAct" id="Q9JHE6">
    <property type="molecule type" value="protein"/>
</dbReference>
<dbReference type="Bgee" id="ENSMUSG00000067071">
    <property type="expression patterns" value="Expressed in floor plate of midbrain and 323 other cell types or tissues"/>
</dbReference>
<dbReference type="GO" id="GO:0005634">
    <property type="term" value="C:nucleus"/>
    <property type="evidence" value="ECO:0007669"/>
    <property type="project" value="UniProtKB-SubCell"/>
</dbReference>
<dbReference type="GO" id="GO:0005667">
    <property type="term" value="C:transcription regulator complex"/>
    <property type="evidence" value="ECO:0000314"/>
    <property type="project" value="MGI"/>
</dbReference>
<dbReference type="GO" id="GO:0003700">
    <property type="term" value="F:DNA-binding transcription factor activity"/>
    <property type="evidence" value="ECO:0000314"/>
    <property type="project" value="MGI"/>
</dbReference>
<dbReference type="GO" id="GO:0001227">
    <property type="term" value="F:DNA-binding transcription repressor activity, RNA polymerase II-specific"/>
    <property type="evidence" value="ECO:0000314"/>
    <property type="project" value="NTNU_SB"/>
</dbReference>
<dbReference type="GO" id="GO:0046982">
    <property type="term" value="F:protein heterodimerization activity"/>
    <property type="evidence" value="ECO:0000266"/>
    <property type="project" value="MGI"/>
</dbReference>
<dbReference type="GO" id="GO:0042803">
    <property type="term" value="F:protein homodimerization activity"/>
    <property type="evidence" value="ECO:0000266"/>
    <property type="project" value="MGI"/>
</dbReference>
<dbReference type="GO" id="GO:0000977">
    <property type="term" value="F:RNA polymerase II transcription regulatory region sequence-specific DNA binding"/>
    <property type="evidence" value="ECO:0000314"/>
    <property type="project" value="NTNU_SB"/>
</dbReference>
<dbReference type="GO" id="GO:0061629">
    <property type="term" value="F:RNA polymerase II-specific DNA-binding transcription factor binding"/>
    <property type="evidence" value="ECO:0000353"/>
    <property type="project" value="ARUK-UCL"/>
</dbReference>
<dbReference type="GO" id="GO:0140416">
    <property type="term" value="F:transcription regulator inhibitor activity"/>
    <property type="evidence" value="ECO:0000314"/>
    <property type="project" value="ARUK-UCL"/>
</dbReference>
<dbReference type="GO" id="GO:0030154">
    <property type="term" value="P:cell differentiation"/>
    <property type="evidence" value="ECO:0000314"/>
    <property type="project" value="MGI"/>
</dbReference>
<dbReference type="GO" id="GO:0000122">
    <property type="term" value="P:negative regulation of transcription by RNA polymerase II"/>
    <property type="evidence" value="ECO:0000314"/>
    <property type="project" value="NTNU_SB"/>
</dbReference>
<dbReference type="GO" id="GO:0007399">
    <property type="term" value="P:nervous system development"/>
    <property type="evidence" value="ECO:0000315"/>
    <property type="project" value="MGI"/>
</dbReference>
<dbReference type="GO" id="GO:0045944">
    <property type="term" value="P:positive regulation of transcription by RNA polymerase II"/>
    <property type="evidence" value="ECO:0000314"/>
    <property type="project" value="ARUK-UCL"/>
</dbReference>
<dbReference type="GO" id="GO:0006357">
    <property type="term" value="P:regulation of transcription by RNA polymerase II"/>
    <property type="evidence" value="ECO:0000314"/>
    <property type="project" value="MGI"/>
</dbReference>
<dbReference type="FunFam" id="4.10.280.10:FF:000081">
    <property type="entry name" value="transcription cofactor HES-6 isoform X1"/>
    <property type="match status" value="1"/>
</dbReference>
<dbReference type="Gene3D" id="6.10.250.980">
    <property type="match status" value="1"/>
</dbReference>
<dbReference type="Gene3D" id="4.10.280.10">
    <property type="entry name" value="Helix-loop-helix DNA-binding domain"/>
    <property type="match status" value="1"/>
</dbReference>
<dbReference type="InterPro" id="IPR011598">
    <property type="entry name" value="bHLH_dom"/>
</dbReference>
<dbReference type="InterPro" id="IPR050370">
    <property type="entry name" value="HES_HEY"/>
</dbReference>
<dbReference type="InterPro" id="IPR036638">
    <property type="entry name" value="HLH_DNA-bd_sf"/>
</dbReference>
<dbReference type="InterPro" id="IPR003650">
    <property type="entry name" value="Orange_dom"/>
</dbReference>
<dbReference type="PANTHER" id="PTHR10985">
    <property type="entry name" value="BASIC HELIX-LOOP-HELIX TRANSCRIPTION FACTOR, HES-RELATED"/>
    <property type="match status" value="1"/>
</dbReference>
<dbReference type="Pfam" id="PF07527">
    <property type="entry name" value="Hairy_orange"/>
    <property type="match status" value="1"/>
</dbReference>
<dbReference type="Pfam" id="PF00010">
    <property type="entry name" value="HLH"/>
    <property type="match status" value="1"/>
</dbReference>
<dbReference type="SMART" id="SM00353">
    <property type="entry name" value="HLH"/>
    <property type="match status" value="1"/>
</dbReference>
<dbReference type="SUPFAM" id="SSF47459">
    <property type="entry name" value="HLH, helix-loop-helix DNA-binding domain"/>
    <property type="match status" value="1"/>
</dbReference>
<dbReference type="SUPFAM" id="SSF158457">
    <property type="entry name" value="Orange domain-like"/>
    <property type="match status" value="1"/>
</dbReference>
<dbReference type="PROSITE" id="PS50888">
    <property type="entry name" value="BHLH"/>
    <property type="match status" value="1"/>
</dbReference>
<dbReference type="PROSITE" id="PS51054">
    <property type="entry name" value="ORANGE"/>
    <property type="match status" value="1"/>
</dbReference>
<feature type="chain" id="PRO_0000127215" description="Transcription cofactor HES-6">
    <location>
        <begin position="1"/>
        <end position="224"/>
    </location>
</feature>
<feature type="domain" description="bHLH" evidence="3">
    <location>
        <begin position="25"/>
        <end position="77"/>
    </location>
</feature>
<feature type="domain" description="Orange" evidence="2">
    <location>
        <begin position="96"/>
        <end position="129"/>
    </location>
</feature>
<feature type="region of interest" description="Disordered" evidence="4">
    <location>
        <begin position="1"/>
        <end position="31"/>
    </location>
</feature>
<feature type="region of interest" description="Disordered" evidence="4">
    <location>
        <begin position="146"/>
        <end position="209"/>
    </location>
</feature>
<feature type="short sequence motif" description="WRPW motif">
    <location>
        <begin position="221"/>
        <end position="224"/>
    </location>
</feature>
<feature type="compositionally biased region" description="Basic and acidic residues" evidence="4">
    <location>
        <begin position="8"/>
        <end position="25"/>
    </location>
</feature>
<feature type="compositionally biased region" description="Low complexity" evidence="4">
    <location>
        <begin position="158"/>
        <end position="171"/>
    </location>
</feature>
<feature type="compositionally biased region" description="Acidic residues" evidence="4">
    <location>
        <begin position="181"/>
        <end position="190"/>
    </location>
</feature>
<organism>
    <name type="scientific">Mus musculus</name>
    <name type="common">Mouse</name>
    <dbReference type="NCBI Taxonomy" id="10090"/>
    <lineage>
        <taxon>Eukaryota</taxon>
        <taxon>Metazoa</taxon>
        <taxon>Chordata</taxon>
        <taxon>Craniata</taxon>
        <taxon>Vertebrata</taxon>
        <taxon>Euteleostomi</taxon>
        <taxon>Mammalia</taxon>
        <taxon>Eutheria</taxon>
        <taxon>Euarchontoglires</taxon>
        <taxon>Glires</taxon>
        <taxon>Rodentia</taxon>
        <taxon>Myomorpha</taxon>
        <taxon>Muroidea</taxon>
        <taxon>Muridae</taxon>
        <taxon>Murinae</taxon>
        <taxon>Mus</taxon>
        <taxon>Mus</taxon>
    </lineage>
</organism>
<keyword id="KW-0217">Developmental protein</keyword>
<keyword id="KW-0221">Differentiation</keyword>
<keyword id="KW-0539">Nucleus</keyword>
<keyword id="KW-1185">Reference proteome</keyword>
<keyword id="KW-0678">Repressor</keyword>
<keyword id="KW-0804">Transcription</keyword>
<keyword id="KW-0805">Transcription regulation</keyword>
<accession>Q9JHE6</accession>
<accession>Q3U2D7</accession>
<protein>
    <recommendedName>
        <fullName>Transcription cofactor HES-6</fullName>
    </recommendedName>
    <alternativeName>
        <fullName>Hairy and enhancer of split 6</fullName>
    </alternativeName>
</protein>
<evidence type="ECO:0000250" key="1"/>
<evidence type="ECO:0000255" key="2">
    <source>
        <dbReference type="PROSITE-ProRule" id="PRU00380"/>
    </source>
</evidence>
<evidence type="ECO:0000255" key="3">
    <source>
        <dbReference type="PROSITE-ProRule" id="PRU00981"/>
    </source>
</evidence>
<evidence type="ECO:0000256" key="4">
    <source>
        <dbReference type="SAM" id="MobiDB-lite"/>
    </source>
</evidence>
<evidence type="ECO:0000269" key="5">
    <source>
    </source>
</evidence>
<evidence type="ECO:0000269" key="6">
    <source>
    </source>
</evidence>
<evidence type="ECO:0000269" key="7">
    <source>
    </source>
</evidence>
<evidence type="ECO:0000305" key="8"/>
<evidence type="ECO:0000312" key="9">
    <source>
        <dbReference type="EMBL" id="AAF63757.1"/>
    </source>
</evidence>
<evidence type="ECO:0000312" key="10">
    <source>
        <dbReference type="EMBL" id="AAH12897.1"/>
    </source>
</evidence>
<evidence type="ECO:0000312" key="11">
    <source>
        <dbReference type="EMBL" id="AAK51633.1"/>
    </source>
</evidence>
<evidence type="ECO:0000312" key="12">
    <source>
        <dbReference type="EMBL" id="BAA96081.1"/>
    </source>
</evidence>
<comment type="function">
    <text evidence="5">Does not bind DNA itself but suppresses both HES1-mediated N box-dependent transcriptional repression and binding of HES1 to E box sequences. Also suppresses HES1-mediated inhibition of the heterodimer formed by ASCL1/MASH1 and TCF3/E47, allowing ASCL1 and TCF3 to up-regulate transcription in its presence. Promotes cell differentiation.</text>
</comment>
<comment type="subunit">
    <text evidence="1 5">Transcription repression requires formation of a complex with a corepressor protein of the Groucho/TLE family (By similarity). Interacts with HES1.</text>
</comment>
<comment type="subcellular location">
    <subcellularLocation>
        <location evidence="8">Nucleus</location>
    </subcellularLocation>
</comment>
<comment type="tissue specificity">
    <text evidence="6 7">Expressed in both undifferentiated and differentiated cells. High levels of expression are observed in several embryonic tissues including the nervous system, muscle and thymus. In the nervous system, initially expressed in the closing neural tube, then in the spinal cord, cranial and dorsal root ganglia, and brain neuroepithelium. Also expressed in epithelial cells of the embryonic respiratory, urinary and digestive systems. In the limb buds, expressed in skeletal muscle and presumptive tendons.</text>
</comment>
<comment type="developmental stage">
    <text evidence="5">Expressed in both embryo and adult. Expression in the embryo is detected from 8.5 dpc. In the retina, expressed at high levels at postnatal 0 dpc. Expression in brain and retina decreases postnatally but still detectable in adult.</text>
</comment>
<comment type="domain">
    <text evidence="1">The C-terminal WRPW motif is a transcriptional repression domain necessary for the interaction with Groucho/TLE family members, transcriptional corepressors recruited to specific target DNA by Hairy-related proteins.</text>
</comment>
<comment type="domain">
    <text>Has a particular type of basic domain (presence of a helix-interrupting proline) that binds to the N-box (CACNAG), rather than the canonical E-box (CANNTG).</text>
</comment>